<evidence type="ECO:0000255" key="1">
    <source>
        <dbReference type="HAMAP-Rule" id="MF_00203"/>
    </source>
</evidence>
<evidence type="ECO:0000305" key="2"/>
<proteinExistence type="inferred from homology"/>
<keyword id="KW-0963">Cytoplasm</keyword>
<keyword id="KW-0227">DNA damage</keyword>
<keyword id="KW-0228">DNA excision</keyword>
<keyword id="KW-0234">DNA repair</keyword>
<keyword id="KW-0267">Excision nuclease</keyword>
<keyword id="KW-1185">Reference proteome</keyword>
<keyword id="KW-0742">SOS response</keyword>
<feature type="chain" id="PRO_0000264950" description="UvrABC system protein C">
    <location>
        <begin position="1"/>
        <end position="610"/>
    </location>
</feature>
<feature type="domain" description="GIY-YIG" evidence="1">
    <location>
        <begin position="16"/>
        <end position="94"/>
    </location>
</feature>
<feature type="domain" description="UVR" evidence="1">
    <location>
        <begin position="204"/>
        <end position="239"/>
    </location>
</feature>
<sequence length="610" mass="68188">MSDQFDAKAFLKTVTSQPGVYRMYDAGGTVIYVGKAKDLKKRLSSYFRSNLASRKTEALVAQIQQIDVTVTHTETEALLLEHNYIKLYQPRYNVLLRDDKSYPFIFLSGDTHPRLAMHRGAKHAKGEYFGPFPNGYAVRETLALLQKIFPIRQCENSVYRNRSRPCLQYQIGRCLGPCVEGLVSEEEYAQQVEYVRLFLSGKDDQVLTQLISRMETASQNLEFEEAARIRDQIQAVRRVTEKQFVSNTGDDLDVIGVAFDAGMACVHVLFIRQGKVLGSRSYFPKVPGGTELSEVVETFVGQFYLQGSQMRTLPGEILLDFNLSDKTLLADSLSELAGRKINVQTKPRGDRARYLKLARTNAATALTSKLSQQSTVHQRLTALASVLKLPEVKRMECFDISHTMGEQTVASCVVFDANGPLRAEYRRYNITGITPGDDYAAMNQVLRRRYGKAIDDSKIPDVILIDGGKGQLAQAKNVFAELDVSWDKNHPLLLGVAKGADRKAGLETLFFEPEGEGFSLPPDSPALHVIQHIRDESHDHAIGGHRKKRAKVKNTSSLETIEGVGPKRRQMLLKYMGGLQGLRNASVEEIAKVPGISQGLAEKIFWSLKH</sequence>
<gene>
    <name evidence="1" type="primary">uvrC</name>
    <name type="ordered locus">SSON_1205</name>
</gene>
<organism>
    <name type="scientific">Shigella sonnei (strain Ss046)</name>
    <dbReference type="NCBI Taxonomy" id="300269"/>
    <lineage>
        <taxon>Bacteria</taxon>
        <taxon>Pseudomonadati</taxon>
        <taxon>Pseudomonadota</taxon>
        <taxon>Gammaproteobacteria</taxon>
        <taxon>Enterobacterales</taxon>
        <taxon>Enterobacteriaceae</taxon>
        <taxon>Shigella</taxon>
    </lineage>
</organism>
<dbReference type="EMBL" id="CP000038">
    <property type="protein sequence ID" value="AAZ87925.1"/>
    <property type="status" value="ALT_INIT"/>
    <property type="molecule type" value="Genomic_DNA"/>
</dbReference>
<dbReference type="RefSeq" id="WP_001283421.1">
    <property type="nucleotide sequence ID" value="NC_007384.1"/>
</dbReference>
<dbReference type="SMR" id="Q3Z2T7"/>
<dbReference type="GeneID" id="93776218"/>
<dbReference type="KEGG" id="ssn:SSON_1205"/>
<dbReference type="HOGENOM" id="CLU_014841_3_2_6"/>
<dbReference type="Proteomes" id="UP000002529">
    <property type="component" value="Chromosome"/>
</dbReference>
<dbReference type="GO" id="GO:0005737">
    <property type="term" value="C:cytoplasm"/>
    <property type="evidence" value="ECO:0007669"/>
    <property type="project" value="UniProtKB-SubCell"/>
</dbReference>
<dbReference type="GO" id="GO:0009380">
    <property type="term" value="C:excinuclease repair complex"/>
    <property type="evidence" value="ECO:0007669"/>
    <property type="project" value="InterPro"/>
</dbReference>
<dbReference type="GO" id="GO:0003677">
    <property type="term" value="F:DNA binding"/>
    <property type="evidence" value="ECO:0007669"/>
    <property type="project" value="UniProtKB-UniRule"/>
</dbReference>
<dbReference type="GO" id="GO:0009381">
    <property type="term" value="F:excinuclease ABC activity"/>
    <property type="evidence" value="ECO:0007669"/>
    <property type="project" value="UniProtKB-UniRule"/>
</dbReference>
<dbReference type="GO" id="GO:0006289">
    <property type="term" value="P:nucleotide-excision repair"/>
    <property type="evidence" value="ECO:0007669"/>
    <property type="project" value="UniProtKB-UniRule"/>
</dbReference>
<dbReference type="GO" id="GO:0009432">
    <property type="term" value="P:SOS response"/>
    <property type="evidence" value="ECO:0007669"/>
    <property type="project" value="UniProtKB-UniRule"/>
</dbReference>
<dbReference type="CDD" id="cd10434">
    <property type="entry name" value="GIY-YIG_UvrC_Cho"/>
    <property type="match status" value="1"/>
</dbReference>
<dbReference type="FunFam" id="1.10.150.20:FF:000005">
    <property type="entry name" value="UvrABC system protein C"/>
    <property type="match status" value="1"/>
</dbReference>
<dbReference type="FunFam" id="3.30.420.340:FF:000001">
    <property type="entry name" value="UvrABC system protein C"/>
    <property type="match status" value="1"/>
</dbReference>
<dbReference type="FunFam" id="3.40.1440.10:FF:000001">
    <property type="entry name" value="UvrABC system protein C"/>
    <property type="match status" value="1"/>
</dbReference>
<dbReference type="FunFam" id="4.10.860.10:FF:000002">
    <property type="entry name" value="UvrABC system protein C"/>
    <property type="match status" value="1"/>
</dbReference>
<dbReference type="Gene3D" id="1.10.150.20">
    <property type="entry name" value="5' to 3' exonuclease, C-terminal subdomain"/>
    <property type="match status" value="1"/>
</dbReference>
<dbReference type="Gene3D" id="3.40.1440.10">
    <property type="entry name" value="GIY-YIG endonuclease"/>
    <property type="match status" value="1"/>
</dbReference>
<dbReference type="Gene3D" id="4.10.860.10">
    <property type="entry name" value="UVR domain"/>
    <property type="match status" value="1"/>
</dbReference>
<dbReference type="Gene3D" id="3.30.420.340">
    <property type="entry name" value="UvrC, RNAse H endonuclease domain"/>
    <property type="match status" value="1"/>
</dbReference>
<dbReference type="HAMAP" id="MF_00203">
    <property type="entry name" value="UvrC"/>
    <property type="match status" value="1"/>
</dbReference>
<dbReference type="InterPro" id="IPR000305">
    <property type="entry name" value="GIY-YIG_endonuc"/>
</dbReference>
<dbReference type="InterPro" id="IPR035901">
    <property type="entry name" value="GIY-YIG_endonuc_sf"/>
</dbReference>
<dbReference type="InterPro" id="IPR047296">
    <property type="entry name" value="GIY-YIG_UvrC_Cho"/>
</dbReference>
<dbReference type="InterPro" id="IPR003583">
    <property type="entry name" value="Hlx-hairpin-Hlx_DNA-bd_motif"/>
</dbReference>
<dbReference type="InterPro" id="IPR010994">
    <property type="entry name" value="RuvA_2-like"/>
</dbReference>
<dbReference type="InterPro" id="IPR001943">
    <property type="entry name" value="UVR_dom"/>
</dbReference>
<dbReference type="InterPro" id="IPR036876">
    <property type="entry name" value="UVR_dom_sf"/>
</dbReference>
<dbReference type="InterPro" id="IPR050066">
    <property type="entry name" value="UvrABC_protein_C"/>
</dbReference>
<dbReference type="InterPro" id="IPR004791">
    <property type="entry name" value="UvrC"/>
</dbReference>
<dbReference type="InterPro" id="IPR001162">
    <property type="entry name" value="UvrC_RNase_H_dom"/>
</dbReference>
<dbReference type="InterPro" id="IPR038476">
    <property type="entry name" value="UvrC_RNase_H_dom_sf"/>
</dbReference>
<dbReference type="NCBIfam" id="NF001824">
    <property type="entry name" value="PRK00558.1-5"/>
    <property type="match status" value="1"/>
</dbReference>
<dbReference type="NCBIfam" id="TIGR00194">
    <property type="entry name" value="uvrC"/>
    <property type="match status" value="1"/>
</dbReference>
<dbReference type="PANTHER" id="PTHR30562:SF1">
    <property type="entry name" value="UVRABC SYSTEM PROTEIN C"/>
    <property type="match status" value="1"/>
</dbReference>
<dbReference type="PANTHER" id="PTHR30562">
    <property type="entry name" value="UVRC/OXIDOREDUCTASE"/>
    <property type="match status" value="1"/>
</dbReference>
<dbReference type="Pfam" id="PF01541">
    <property type="entry name" value="GIY-YIG"/>
    <property type="match status" value="1"/>
</dbReference>
<dbReference type="Pfam" id="PF14520">
    <property type="entry name" value="HHH_5"/>
    <property type="match status" value="1"/>
</dbReference>
<dbReference type="Pfam" id="PF02151">
    <property type="entry name" value="UVR"/>
    <property type="match status" value="1"/>
</dbReference>
<dbReference type="Pfam" id="PF22920">
    <property type="entry name" value="UvrC_RNaseH"/>
    <property type="match status" value="1"/>
</dbReference>
<dbReference type="Pfam" id="PF08459">
    <property type="entry name" value="UvrC_RNaseH_dom"/>
    <property type="match status" value="1"/>
</dbReference>
<dbReference type="SMART" id="SM00465">
    <property type="entry name" value="GIYc"/>
    <property type="match status" value="1"/>
</dbReference>
<dbReference type="SMART" id="SM00278">
    <property type="entry name" value="HhH1"/>
    <property type="match status" value="2"/>
</dbReference>
<dbReference type="SUPFAM" id="SSF46600">
    <property type="entry name" value="C-terminal UvrC-binding domain of UvrB"/>
    <property type="match status" value="1"/>
</dbReference>
<dbReference type="SUPFAM" id="SSF82771">
    <property type="entry name" value="GIY-YIG endonuclease"/>
    <property type="match status" value="1"/>
</dbReference>
<dbReference type="SUPFAM" id="SSF47781">
    <property type="entry name" value="RuvA domain 2-like"/>
    <property type="match status" value="1"/>
</dbReference>
<dbReference type="PROSITE" id="PS50164">
    <property type="entry name" value="GIY_YIG"/>
    <property type="match status" value="1"/>
</dbReference>
<dbReference type="PROSITE" id="PS50151">
    <property type="entry name" value="UVR"/>
    <property type="match status" value="1"/>
</dbReference>
<dbReference type="PROSITE" id="PS50165">
    <property type="entry name" value="UVRC"/>
    <property type="match status" value="1"/>
</dbReference>
<accession>Q3Z2T7</accession>
<name>UVRC_SHISS</name>
<protein>
    <recommendedName>
        <fullName evidence="1">UvrABC system protein C</fullName>
        <shortName evidence="1">Protein UvrC</shortName>
    </recommendedName>
    <alternativeName>
        <fullName evidence="1">Excinuclease ABC subunit C</fullName>
    </alternativeName>
</protein>
<comment type="function">
    <text evidence="1">The UvrABC repair system catalyzes the recognition and processing of DNA lesions. UvrC both incises the 5' and 3' sides of the lesion. The N-terminal half is responsible for the 3' incision and the C-terminal half is responsible for the 5' incision.</text>
</comment>
<comment type="subunit">
    <text evidence="1">Interacts with UvrB in an incision complex.</text>
</comment>
<comment type="subcellular location">
    <subcellularLocation>
        <location evidence="1">Cytoplasm</location>
    </subcellularLocation>
</comment>
<comment type="similarity">
    <text evidence="1">Belongs to the UvrC family.</text>
</comment>
<comment type="sequence caution" evidence="2">
    <conflict type="erroneous initiation">
        <sequence resource="EMBL-CDS" id="AAZ87925"/>
    </conflict>
</comment>
<reference key="1">
    <citation type="journal article" date="2005" name="Nucleic Acids Res.">
        <title>Genome dynamics and diversity of Shigella species, the etiologic agents of bacillary dysentery.</title>
        <authorList>
            <person name="Yang F."/>
            <person name="Yang J."/>
            <person name="Zhang X."/>
            <person name="Chen L."/>
            <person name="Jiang Y."/>
            <person name="Yan Y."/>
            <person name="Tang X."/>
            <person name="Wang J."/>
            <person name="Xiong Z."/>
            <person name="Dong J."/>
            <person name="Xue Y."/>
            <person name="Zhu Y."/>
            <person name="Xu X."/>
            <person name="Sun L."/>
            <person name="Chen S."/>
            <person name="Nie H."/>
            <person name="Peng J."/>
            <person name="Xu J."/>
            <person name="Wang Y."/>
            <person name="Yuan Z."/>
            <person name="Wen Y."/>
            <person name="Yao Z."/>
            <person name="Shen Y."/>
            <person name="Qiang B."/>
            <person name="Hou Y."/>
            <person name="Yu J."/>
            <person name="Jin Q."/>
        </authorList>
    </citation>
    <scope>NUCLEOTIDE SEQUENCE [LARGE SCALE GENOMIC DNA]</scope>
    <source>
        <strain>Ss046</strain>
    </source>
</reference>